<reference key="1">
    <citation type="journal article" date="2001" name="Proc. Natl. Acad. Sci. U.S.A.">
        <title>Analysis of the chromosome sequence of the legume symbiont Sinorhizobium meliloti strain 1021.</title>
        <authorList>
            <person name="Capela D."/>
            <person name="Barloy-Hubler F."/>
            <person name="Gouzy J."/>
            <person name="Bothe G."/>
            <person name="Ampe F."/>
            <person name="Batut J."/>
            <person name="Boistard P."/>
            <person name="Becker A."/>
            <person name="Boutry M."/>
            <person name="Cadieu E."/>
            <person name="Dreano S."/>
            <person name="Gloux S."/>
            <person name="Godrie T."/>
            <person name="Goffeau A."/>
            <person name="Kahn D."/>
            <person name="Kiss E."/>
            <person name="Lelaure V."/>
            <person name="Masuy D."/>
            <person name="Pohl T."/>
            <person name="Portetelle D."/>
            <person name="Puehler A."/>
            <person name="Purnelle B."/>
            <person name="Ramsperger U."/>
            <person name="Renard C."/>
            <person name="Thebault P."/>
            <person name="Vandenbol M."/>
            <person name="Weidner S."/>
            <person name="Galibert F."/>
        </authorList>
    </citation>
    <scope>NUCLEOTIDE SEQUENCE [LARGE SCALE GENOMIC DNA]</scope>
    <source>
        <strain>1021</strain>
    </source>
</reference>
<reference key="2">
    <citation type="journal article" date="2001" name="Science">
        <title>The composite genome of the legume symbiont Sinorhizobium meliloti.</title>
        <authorList>
            <person name="Galibert F."/>
            <person name="Finan T.M."/>
            <person name="Long S.R."/>
            <person name="Puehler A."/>
            <person name="Abola P."/>
            <person name="Ampe F."/>
            <person name="Barloy-Hubler F."/>
            <person name="Barnett M.J."/>
            <person name="Becker A."/>
            <person name="Boistard P."/>
            <person name="Bothe G."/>
            <person name="Boutry M."/>
            <person name="Bowser L."/>
            <person name="Buhrmester J."/>
            <person name="Cadieu E."/>
            <person name="Capela D."/>
            <person name="Chain P."/>
            <person name="Cowie A."/>
            <person name="Davis R.W."/>
            <person name="Dreano S."/>
            <person name="Federspiel N.A."/>
            <person name="Fisher R.F."/>
            <person name="Gloux S."/>
            <person name="Godrie T."/>
            <person name="Goffeau A."/>
            <person name="Golding B."/>
            <person name="Gouzy J."/>
            <person name="Gurjal M."/>
            <person name="Hernandez-Lucas I."/>
            <person name="Hong A."/>
            <person name="Huizar L."/>
            <person name="Hyman R.W."/>
            <person name="Jones T."/>
            <person name="Kahn D."/>
            <person name="Kahn M.L."/>
            <person name="Kalman S."/>
            <person name="Keating D.H."/>
            <person name="Kiss E."/>
            <person name="Komp C."/>
            <person name="Lelaure V."/>
            <person name="Masuy D."/>
            <person name="Palm C."/>
            <person name="Peck M.C."/>
            <person name="Pohl T.M."/>
            <person name="Portetelle D."/>
            <person name="Purnelle B."/>
            <person name="Ramsperger U."/>
            <person name="Surzycki R."/>
            <person name="Thebault P."/>
            <person name="Vandenbol M."/>
            <person name="Vorhoelter F.J."/>
            <person name="Weidner S."/>
            <person name="Wells D.H."/>
            <person name="Wong K."/>
            <person name="Yeh K.-C."/>
            <person name="Batut J."/>
        </authorList>
    </citation>
    <scope>NUCLEOTIDE SEQUENCE [LARGE SCALE GENOMIC DNA]</scope>
    <source>
        <strain>1021</strain>
    </source>
</reference>
<accession>Q92PZ4</accession>
<feature type="chain" id="PRO_0000145033" description="Carbamoyl phosphate synthase large chain">
    <location>
        <begin position="1"/>
        <end position="1163"/>
    </location>
</feature>
<feature type="domain" description="ATP-grasp 1" evidence="1">
    <location>
        <begin position="185"/>
        <end position="381"/>
    </location>
</feature>
<feature type="domain" description="ATP-grasp 2" evidence="1">
    <location>
        <begin position="743"/>
        <end position="955"/>
    </location>
</feature>
<feature type="domain" description="MGS-like" evidence="1">
    <location>
        <begin position="1027"/>
        <end position="1163"/>
    </location>
</feature>
<feature type="region of interest" description="Carboxyphosphate synthetic domain" evidence="1">
    <location>
        <begin position="1"/>
        <end position="456"/>
    </location>
</feature>
<feature type="region of interest" description="Disordered" evidence="2">
    <location>
        <begin position="148"/>
        <end position="170"/>
    </location>
</feature>
<feature type="region of interest" description="Oligomerization domain" evidence="1">
    <location>
        <begin position="457"/>
        <end position="614"/>
    </location>
</feature>
<feature type="region of interest" description="Carbamoyl phosphate synthetic domain" evidence="1">
    <location>
        <begin position="615"/>
        <end position="1026"/>
    </location>
</feature>
<feature type="region of interest" description="Allosteric domain" evidence="1">
    <location>
        <begin position="1027"/>
        <end position="1163"/>
    </location>
</feature>
<feature type="compositionally biased region" description="Basic and acidic residues" evidence="2">
    <location>
        <begin position="153"/>
        <end position="170"/>
    </location>
</feature>
<feature type="binding site" evidence="1">
    <location>
        <position position="129"/>
    </location>
    <ligand>
        <name>ATP</name>
        <dbReference type="ChEBI" id="CHEBI:30616"/>
        <label>1</label>
    </ligand>
</feature>
<feature type="binding site" evidence="1">
    <location>
        <position position="222"/>
    </location>
    <ligand>
        <name>ATP</name>
        <dbReference type="ChEBI" id="CHEBI:30616"/>
        <label>1</label>
    </ligand>
</feature>
<feature type="binding site" evidence="1">
    <location>
        <position position="228"/>
    </location>
    <ligand>
        <name>ATP</name>
        <dbReference type="ChEBI" id="CHEBI:30616"/>
        <label>1</label>
    </ligand>
</feature>
<feature type="binding site" evidence="1">
    <location>
        <position position="229"/>
    </location>
    <ligand>
        <name>ATP</name>
        <dbReference type="ChEBI" id="CHEBI:30616"/>
        <label>1</label>
    </ligand>
</feature>
<feature type="binding site" evidence="1">
    <location>
        <position position="261"/>
    </location>
    <ligand>
        <name>ATP</name>
        <dbReference type="ChEBI" id="CHEBI:30616"/>
        <label>1</label>
    </ligand>
</feature>
<feature type="binding site" evidence="1">
    <location>
        <position position="263"/>
    </location>
    <ligand>
        <name>ATP</name>
        <dbReference type="ChEBI" id="CHEBI:30616"/>
        <label>1</label>
    </ligand>
</feature>
<feature type="binding site" evidence="1">
    <location>
        <position position="268"/>
    </location>
    <ligand>
        <name>ATP</name>
        <dbReference type="ChEBI" id="CHEBI:30616"/>
        <label>1</label>
    </ligand>
</feature>
<feature type="binding site" evidence="1">
    <location>
        <position position="294"/>
    </location>
    <ligand>
        <name>ATP</name>
        <dbReference type="ChEBI" id="CHEBI:30616"/>
        <label>1</label>
    </ligand>
</feature>
<feature type="binding site" evidence="1">
    <location>
        <position position="295"/>
    </location>
    <ligand>
        <name>ATP</name>
        <dbReference type="ChEBI" id="CHEBI:30616"/>
        <label>1</label>
    </ligand>
</feature>
<feature type="binding site" evidence="1">
    <location>
        <position position="296"/>
    </location>
    <ligand>
        <name>ATP</name>
        <dbReference type="ChEBI" id="CHEBI:30616"/>
        <label>1</label>
    </ligand>
</feature>
<feature type="binding site" evidence="1">
    <location>
        <position position="338"/>
    </location>
    <ligand>
        <name>ATP</name>
        <dbReference type="ChEBI" id="CHEBI:30616"/>
        <label>1</label>
    </ligand>
</feature>
<feature type="binding site" evidence="1">
    <location>
        <position position="338"/>
    </location>
    <ligand>
        <name>Mg(2+)</name>
        <dbReference type="ChEBI" id="CHEBI:18420"/>
        <label>1</label>
    </ligand>
</feature>
<feature type="binding site" evidence="1">
    <location>
        <position position="338"/>
    </location>
    <ligand>
        <name>Mn(2+)</name>
        <dbReference type="ChEBI" id="CHEBI:29035"/>
        <label>1</label>
    </ligand>
</feature>
<feature type="binding site" evidence="1">
    <location>
        <position position="352"/>
    </location>
    <ligand>
        <name>ATP</name>
        <dbReference type="ChEBI" id="CHEBI:30616"/>
        <label>1</label>
    </ligand>
</feature>
<feature type="binding site" evidence="1">
    <location>
        <position position="352"/>
    </location>
    <ligand>
        <name>Mg(2+)</name>
        <dbReference type="ChEBI" id="CHEBI:18420"/>
        <label>1</label>
    </ligand>
</feature>
<feature type="binding site" evidence="1">
    <location>
        <position position="352"/>
    </location>
    <ligand>
        <name>Mg(2+)</name>
        <dbReference type="ChEBI" id="CHEBI:18420"/>
        <label>2</label>
    </ligand>
</feature>
<feature type="binding site" evidence="1">
    <location>
        <position position="352"/>
    </location>
    <ligand>
        <name>Mn(2+)</name>
        <dbReference type="ChEBI" id="CHEBI:29035"/>
        <label>1</label>
    </ligand>
</feature>
<feature type="binding site" evidence="1">
    <location>
        <position position="352"/>
    </location>
    <ligand>
        <name>Mn(2+)</name>
        <dbReference type="ChEBI" id="CHEBI:29035"/>
        <label>2</label>
    </ligand>
</feature>
<feature type="binding site" evidence="1">
    <location>
        <position position="354"/>
    </location>
    <ligand>
        <name>Mg(2+)</name>
        <dbReference type="ChEBI" id="CHEBI:18420"/>
        <label>2</label>
    </ligand>
</feature>
<feature type="binding site" evidence="1">
    <location>
        <position position="354"/>
    </location>
    <ligand>
        <name>Mn(2+)</name>
        <dbReference type="ChEBI" id="CHEBI:29035"/>
        <label>2</label>
    </ligand>
</feature>
<feature type="binding site" evidence="1">
    <location>
        <position position="779"/>
    </location>
    <ligand>
        <name>ATP</name>
        <dbReference type="ChEBI" id="CHEBI:30616"/>
        <label>2</label>
    </ligand>
</feature>
<feature type="binding site" evidence="1">
    <location>
        <position position="839"/>
    </location>
    <ligand>
        <name>ATP</name>
        <dbReference type="ChEBI" id="CHEBI:30616"/>
        <label>2</label>
    </ligand>
</feature>
<feature type="binding site" evidence="1">
    <location>
        <position position="841"/>
    </location>
    <ligand>
        <name>ATP</name>
        <dbReference type="ChEBI" id="CHEBI:30616"/>
        <label>2</label>
    </ligand>
</feature>
<feature type="binding site" evidence="1">
    <location>
        <position position="846"/>
    </location>
    <ligand>
        <name>ATP</name>
        <dbReference type="ChEBI" id="CHEBI:30616"/>
        <label>2</label>
    </ligand>
</feature>
<feature type="binding site" evidence="1">
    <location>
        <position position="871"/>
    </location>
    <ligand>
        <name>ATP</name>
        <dbReference type="ChEBI" id="CHEBI:30616"/>
        <label>2</label>
    </ligand>
</feature>
<feature type="binding site" evidence="1">
    <location>
        <position position="872"/>
    </location>
    <ligand>
        <name>ATP</name>
        <dbReference type="ChEBI" id="CHEBI:30616"/>
        <label>2</label>
    </ligand>
</feature>
<feature type="binding site" evidence="1">
    <location>
        <position position="873"/>
    </location>
    <ligand>
        <name>ATP</name>
        <dbReference type="ChEBI" id="CHEBI:30616"/>
        <label>2</label>
    </ligand>
</feature>
<feature type="binding site" evidence="1">
    <location>
        <position position="874"/>
    </location>
    <ligand>
        <name>ATP</name>
        <dbReference type="ChEBI" id="CHEBI:30616"/>
        <label>2</label>
    </ligand>
</feature>
<feature type="binding site" evidence="1">
    <location>
        <position position="914"/>
    </location>
    <ligand>
        <name>ATP</name>
        <dbReference type="ChEBI" id="CHEBI:30616"/>
        <label>2</label>
    </ligand>
</feature>
<feature type="binding site" evidence="1">
    <location>
        <position position="914"/>
    </location>
    <ligand>
        <name>Mg(2+)</name>
        <dbReference type="ChEBI" id="CHEBI:18420"/>
        <label>3</label>
    </ligand>
</feature>
<feature type="binding site" evidence="1">
    <location>
        <position position="914"/>
    </location>
    <ligand>
        <name>Mn(2+)</name>
        <dbReference type="ChEBI" id="CHEBI:29035"/>
        <label>3</label>
    </ligand>
</feature>
<feature type="binding site" evidence="1">
    <location>
        <position position="926"/>
    </location>
    <ligand>
        <name>ATP</name>
        <dbReference type="ChEBI" id="CHEBI:30616"/>
        <label>2</label>
    </ligand>
</feature>
<feature type="binding site" evidence="1">
    <location>
        <position position="926"/>
    </location>
    <ligand>
        <name>Mg(2+)</name>
        <dbReference type="ChEBI" id="CHEBI:18420"/>
        <label>3</label>
    </ligand>
</feature>
<feature type="binding site" evidence="1">
    <location>
        <position position="926"/>
    </location>
    <ligand>
        <name>Mg(2+)</name>
        <dbReference type="ChEBI" id="CHEBI:18420"/>
        <label>4</label>
    </ligand>
</feature>
<feature type="binding site" evidence="1">
    <location>
        <position position="926"/>
    </location>
    <ligand>
        <name>Mn(2+)</name>
        <dbReference type="ChEBI" id="CHEBI:29035"/>
        <label>3</label>
    </ligand>
</feature>
<feature type="binding site" evidence="1">
    <location>
        <position position="926"/>
    </location>
    <ligand>
        <name>Mn(2+)</name>
        <dbReference type="ChEBI" id="CHEBI:29035"/>
        <label>4</label>
    </ligand>
</feature>
<feature type="binding site" evidence="1">
    <location>
        <position position="928"/>
    </location>
    <ligand>
        <name>Mg(2+)</name>
        <dbReference type="ChEBI" id="CHEBI:18420"/>
        <label>4</label>
    </ligand>
</feature>
<feature type="binding site" evidence="1">
    <location>
        <position position="928"/>
    </location>
    <ligand>
        <name>Mn(2+)</name>
        <dbReference type="ChEBI" id="CHEBI:29035"/>
        <label>4</label>
    </ligand>
</feature>
<comment type="function">
    <text evidence="1">Large subunit of the glutamine-dependent carbamoyl phosphate synthetase (CPSase). CPSase catalyzes the formation of carbamoyl phosphate from the ammonia moiety of glutamine, carbonate, and phosphate donated by ATP, constituting the first step of 2 biosynthetic pathways, one leading to arginine and/or urea and the other to pyrimidine nucleotides. The large subunit (synthetase) binds the substrates ammonia (free or transferred from glutamine from the small subunit), hydrogencarbonate and ATP and carries out an ATP-coupled ligase reaction, activating hydrogencarbonate by forming carboxy phosphate which reacts with ammonia to form carbamoyl phosphate.</text>
</comment>
<comment type="catalytic activity">
    <reaction evidence="1">
        <text>hydrogencarbonate + L-glutamine + 2 ATP + H2O = carbamoyl phosphate + L-glutamate + 2 ADP + phosphate + 2 H(+)</text>
        <dbReference type="Rhea" id="RHEA:18633"/>
        <dbReference type="ChEBI" id="CHEBI:15377"/>
        <dbReference type="ChEBI" id="CHEBI:15378"/>
        <dbReference type="ChEBI" id="CHEBI:17544"/>
        <dbReference type="ChEBI" id="CHEBI:29985"/>
        <dbReference type="ChEBI" id="CHEBI:30616"/>
        <dbReference type="ChEBI" id="CHEBI:43474"/>
        <dbReference type="ChEBI" id="CHEBI:58228"/>
        <dbReference type="ChEBI" id="CHEBI:58359"/>
        <dbReference type="ChEBI" id="CHEBI:456216"/>
        <dbReference type="EC" id="6.3.5.5"/>
    </reaction>
</comment>
<comment type="catalytic activity">
    <molecule>Carbamoyl phosphate synthase large chain</molecule>
    <reaction evidence="1">
        <text>hydrogencarbonate + NH4(+) + 2 ATP = carbamoyl phosphate + 2 ADP + phosphate + 2 H(+)</text>
        <dbReference type="Rhea" id="RHEA:18029"/>
        <dbReference type="ChEBI" id="CHEBI:15378"/>
        <dbReference type="ChEBI" id="CHEBI:17544"/>
        <dbReference type="ChEBI" id="CHEBI:28938"/>
        <dbReference type="ChEBI" id="CHEBI:30616"/>
        <dbReference type="ChEBI" id="CHEBI:43474"/>
        <dbReference type="ChEBI" id="CHEBI:58228"/>
        <dbReference type="ChEBI" id="CHEBI:456216"/>
        <dbReference type="EC" id="6.3.4.16"/>
    </reaction>
</comment>
<comment type="cofactor">
    <cofactor evidence="1">
        <name>Mg(2+)</name>
        <dbReference type="ChEBI" id="CHEBI:18420"/>
    </cofactor>
    <cofactor evidence="1">
        <name>Mn(2+)</name>
        <dbReference type="ChEBI" id="CHEBI:29035"/>
    </cofactor>
    <text evidence="1">Binds 4 Mg(2+) or Mn(2+) ions per subunit.</text>
</comment>
<comment type="pathway">
    <text evidence="1">Amino-acid biosynthesis; L-arginine biosynthesis; carbamoyl phosphate from bicarbonate: step 1/1.</text>
</comment>
<comment type="pathway">
    <text evidence="1">Pyrimidine metabolism; UMP biosynthesis via de novo pathway; (S)-dihydroorotate from bicarbonate: step 1/3.</text>
</comment>
<comment type="subunit">
    <text evidence="1">Composed of two chains; the small (or glutamine) chain promotes the hydrolysis of glutamine to ammonia, which is used by the large (or ammonia) chain to synthesize carbamoyl phosphate. Tetramer of heterodimers (alpha,beta)4.</text>
</comment>
<comment type="domain">
    <text evidence="1">The large subunit is composed of 2 ATP-grasp domains that are involved in binding the 2 ATP molecules needed for carbamoyl phosphate synthesis. The N-terminal ATP-grasp domain (referred to as the carboxyphosphate synthetic component) catalyzes the ATP-dependent phosphorylation of hydrogencarbonate to carboxyphosphate and the subsequent nucleophilic attack by ammonia to form a carbamate intermediate. The C-terminal ATP-grasp domain (referred to as the carbamoyl phosphate synthetic component) then catalyzes the phosphorylation of carbamate with the second ATP to form the end product carbamoyl phosphate. The reactive and unstable enzyme intermediates are sequentially channeled from one active site to the next through the interior of the protein over a distance of at least 96 A.</text>
</comment>
<comment type="similarity">
    <text evidence="1">Belongs to the CarB family.</text>
</comment>
<proteinExistence type="inferred from homology"/>
<protein>
    <recommendedName>
        <fullName evidence="1">Carbamoyl phosphate synthase large chain</fullName>
        <ecNumber evidence="1">6.3.4.16</ecNumber>
        <ecNumber evidence="1">6.3.5.5</ecNumber>
    </recommendedName>
    <alternativeName>
        <fullName evidence="1">Carbamoyl phosphate synthetase ammonia chain</fullName>
    </alternativeName>
</protein>
<dbReference type="EC" id="6.3.4.16" evidence="1"/>
<dbReference type="EC" id="6.3.5.5" evidence="1"/>
<dbReference type="EMBL" id="AL591688">
    <property type="protein sequence ID" value="CAC46155.1"/>
    <property type="molecule type" value="Genomic_DNA"/>
</dbReference>
<dbReference type="RefSeq" id="NP_385682.1">
    <property type="nucleotide sequence ID" value="NC_003047.1"/>
</dbReference>
<dbReference type="RefSeq" id="WP_010969315.1">
    <property type="nucleotide sequence ID" value="NC_003047.1"/>
</dbReference>
<dbReference type="SMR" id="Q92PZ4"/>
<dbReference type="EnsemblBacteria" id="CAC46155">
    <property type="protein sequence ID" value="CAC46155"/>
    <property type="gene ID" value="SMc01215"/>
</dbReference>
<dbReference type="KEGG" id="sme:SMc01215"/>
<dbReference type="PATRIC" id="fig|266834.11.peg.3003"/>
<dbReference type="eggNOG" id="COG0458">
    <property type="taxonomic scope" value="Bacteria"/>
</dbReference>
<dbReference type="HOGENOM" id="CLU_000513_1_0_5"/>
<dbReference type="OrthoDB" id="9804197at2"/>
<dbReference type="UniPathway" id="UPA00068">
    <property type="reaction ID" value="UER00171"/>
</dbReference>
<dbReference type="UniPathway" id="UPA00070">
    <property type="reaction ID" value="UER00115"/>
</dbReference>
<dbReference type="Proteomes" id="UP000001976">
    <property type="component" value="Chromosome"/>
</dbReference>
<dbReference type="GO" id="GO:0005737">
    <property type="term" value="C:cytoplasm"/>
    <property type="evidence" value="ECO:0007669"/>
    <property type="project" value="TreeGrafter"/>
</dbReference>
<dbReference type="GO" id="GO:0005524">
    <property type="term" value="F:ATP binding"/>
    <property type="evidence" value="ECO:0007669"/>
    <property type="project" value="UniProtKB-UniRule"/>
</dbReference>
<dbReference type="GO" id="GO:0004087">
    <property type="term" value="F:carbamoyl-phosphate synthase (ammonia) activity"/>
    <property type="evidence" value="ECO:0007669"/>
    <property type="project" value="RHEA"/>
</dbReference>
<dbReference type="GO" id="GO:0004088">
    <property type="term" value="F:carbamoyl-phosphate synthase (glutamine-hydrolyzing) activity"/>
    <property type="evidence" value="ECO:0007669"/>
    <property type="project" value="UniProtKB-UniRule"/>
</dbReference>
<dbReference type="GO" id="GO:0046872">
    <property type="term" value="F:metal ion binding"/>
    <property type="evidence" value="ECO:0007669"/>
    <property type="project" value="UniProtKB-KW"/>
</dbReference>
<dbReference type="GO" id="GO:0044205">
    <property type="term" value="P:'de novo' UMP biosynthetic process"/>
    <property type="evidence" value="ECO:0007669"/>
    <property type="project" value="UniProtKB-UniRule"/>
</dbReference>
<dbReference type="GO" id="GO:0006541">
    <property type="term" value="P:glutamine metabolic process"/>
    <property type="evidence" value="ECO:0007669"/>
    <property type="project" value="TreeGrafter"/>
</dbReference>
<dbReference type="GO" id="GO:0006526">
    <property type="term" value="P:L-arginine biosynthetic process"/>
    <property type="evidence" value="ECO:0007669"/>
    <property type="project" value="UniProtKB-UniRule"/>
</dbReference>
<dbReference type="CDD" id="cd01424">
    <property type="entry name" value="MGS_CPS_II"/>
    <property type="match status" value="1"/>
</dbReference>
<dbReference type="FunFam" id="1.10.1030.10:FF:000002">
    <property type="entry name" value="Carbamoyl-phosphate synthase large chain"/>
    <property type="match status" value="1"/>
</dbReference>
<dbReference type="FunFam" id="3.30.470.20:FF:000007">
    <property type="entry name" value="Carbamoyl-phosphate synthase large chain"/>
    <property type="match status" value="1"/>
</dbReference>
<dbReference type="FunFam" id="3.30.470.20:FF:000013">
    <property type="entry name" value="Carbamoyl-phosphate synthase large chain"/>
    <property type="match status" value="1"/>
</dbReference>
<dbReference type="FunFam" id="3.40.50.20:FF:000001">
    <property type="entry name" value="Carbamoyl-phosphate synthase large chain"/>
    <property type="match status" value="1"/>
</dbReference>
<dbReference type="FunFam" id="3.40.50.20:FF:000003">
    <property type="entry name" value="Carbamoyl-phosphate synthase large chain"/>
    <property type="match status" value="1"/>
</dbReference>
<dbReference type="Gene3D" id="3.40.50.20">
    <property type="match status" value="2"/>
</dbReference>
<dbReference type="Gene3D" id="3.30.1490.20">
    <property type="entry name" value="ATP-grasp fold, A domain"/>
    <property type="match status" value="1"/>
</dbReference>
<dbReference type="Gene3D" id="3.30.470.20">
    <property type="entry name" value="ATP-grasp fold, B domain"/>
    <property type="match status" value="3"/>
</dbReference>
<dbReference type="Gene3D" id="1.10.1030.10">
    <property type="entry name" value="Carbamoyl-phosphate synthetase, large subunit oligomerisation domain"/>
    <property type="match status" value="1"/>
</dbReference>
<dbReference type="Gene3D" id="3.40.50.1380">
    <property type="entry name" value="Methylglyoxal synthase-like domain"/>
    <property type="match status" value="1"/>
</dbReference>
<dbReference type="HAMAP" id="MF_01210_B">
    <property type="entry name" value="CPSase_L_chain_B"/>
    <property type="match status" value="1"/>
</dbReference>
<dbReference type="InterPro" id="IPR011761">
    <property type="entry name" value="ATP-grasp"/>
</dbReference>
<dbReference type="InterPro" id="IPR013815">
    <property type="entry name" value="ATP_grasp_subdomain_1"/>
</dbReference>
<dbReference type="InterPro" id="IPR006275">
    <property type="entry name" value="CarbamoylP_synth_lsu"/>
</dbReference>
<dbReference type="InterPro" id="IPR005480">
    <property type="entry name" value="CarbamoylP_synth_lsu_oligo"/>
</dbReference>
<dbReference type="InterPro" id="IPR036897">
    <property type="entry name" value="CarbamoylP_synth_lsu_oligo_sf"/>
</dbReference>
<dbReference type="InterPro" id="IPR005479">
    <property type="entry name" value="CbamoylP_synth_lsu-like_ATP-bd"/>
</dbReference>
<dbReference type="InterPro" id="IPR005483">
    <property type="entry name" value="CbamoylP_synth_lsu_CPSase_dom"/>
</dbReference>
<dbReference type="InterPro" id="IPR011607">
    <property type="entry name" value="MGS-like_dom"/>
</dbReference>
<dbReference type="InterPro" id="IPR036914">
    <property type="entry name" value="MGS-like_dom_sf"/>
</dbReference>
<dbReference type="InterPro" id="IPR033937">
    <property type="entry name" value="MGS_CPS_CarB"/>
</dbReference>
<dbReference type="InterPro" id="IPR016185">
    <property type="entry name" value="PreATP-grasp_dom_sf"/>
</dbReference>
<dbReference type="NCBIfam" id="TIGR01369">
    <property type="entry name" value="CPSaseII_lrg"/>
    <property type="match status" value="1"/>
</dbReference>
<dbReference type="NCBIfam" id="NF003671">
    <property type="entry name" value="PRK05294.1"/>
    <property type="match status" value="1"/>
</dbReference>
<dbReference type="NCBIfam" id="NF009455">
    <property type="entry name" value="PRK12815.1"/>
    <property type="match status" value="1"/>
</dbReference>
<dbReference type="PANTHER" id="PTHR11405:SF53">
    <property type="entry name" value="CARBAMOYL-PHOSPHATE SYNTHASE [AMMONIA], MITOCHONDRIAL"/>
    <property type="match status" value="1"/>
</dbReference>
<dbReference type="PANTHER" id="PTHR11405">
    <property type="entry name" value="CARBAMOYLTRANSFERASE FAMILY MEMBER"/>
    <property type="match status" value="1"/>
</dbReference>
<dbReference type="Pfam" id="PF02786">
    <property type="entry name" value="CPSase_L_D2"/>
    <property type="match status" value="3"/>
</dbReference>
<dbReference type="Pfam" id="PF02787">
    <property type="entry name" value="CPSase_L_D3"/>
    <property type="match status" value="1"/>
</dbReference>
<dbReference type="Pfam" id="PF02142">
    <property type="entry name" value="MGS"/>
    <property type="match status" value="1"/>
</dbReference>
<dbReference type="PRINTS" id="PR00098">
    <property type="entry name" value="CPSASE"/>
</dbReference>
<dbReference type="SMART" id="SM01096">
    <property type="entry name" value="CPSase_L_D3"/>
    <property type="match status" value="1"/>
</dbReference>
<dbReference type="SMART" id="SM00851">
    <property type="entry name" value="MGS"/>
    <property type="match status" value="1"/>
</dbReference>
<dbReference type="SUPFAM" id="SSF48108">
    <property type="entry name" value="Carbamoyl phosphate synthetase, large subunit connection domain"/>
    <property type="match status" value="1"/>
</dbReference>
<dbReference type="SUPFAM" id="SSF56059">
    <property type="entry name" value="Glutathione synthetase ATP-binding domain-like"/>
    <property type="match status" value="2"/>
</dbReference>
<dbReference type="SUPFAM" id="SSF52335">
    <property type="entry name" value="Methylglyoxal synthase-like"/>
    <property type="match status" value="1"/>
</dbReference>
<dbReference type="SUPFAM" id="SSF52440">
    <property type="entry name" value="PreATP-grasp domain"/>
    <property type="match status" value="2"/>
</dbReference>
<dbReference type="PROSITE" id="PS50975">
    <property type="entry name" value="ATP_GRASP"/>
    <property type="match status" value="2"/>
</dbReference>
<dbReference type="PROSITE" id="PS00866">
    <property type="entry name" value="CPSASE_1"/>
    <property type="match status" value="1"/>
</dbReference>
<dbReference type="PROSITE" id="PS00867">
    <property type="entry name" value="CPSASE_2"/>
    <property type="match status" value="2"/>
</dbReference>
<dbReference type="PROSITE" id="PS51855">
    <property type="entry name" value="MGS"/>
    <property type="match status" value="1"/>
</dbReference>
<evidence type="ECO:0000255" key="1">
    <source>
        <dbReference type="HAMAP-Rule" id="MF_01210"/>
    </source>
</evidence>
<evidence type="ECO:0000256" key="2">
    <source>
        <dbReference type="SAM" id="MobiDB-lite"/>
    </source>
</evidence>
<keyword id="KW-0028">Amino-acid biosynthesis</keyword>
<keyword id="KW-0055">Arginine biosynthesis</keyword>
<keyword id="KW-0067">ATP-binding</keyword>
<keyword id="KW-0436">Ligase</keyword>
<keyword id="KW-0460">Magnesium</keyword>
<keyword id="KW-0464">Manganese</keyword>
<keyword id="KW-0479">Metal-binding</keyword>
<keyword id="KW-0547">Nucleotide-binding</keyword>
<keyword id="KW-0665">Pyrimidine biosynthesis</keyword>
<keyword id="KW-1185">Reference proteome</keyword>
<keyword id="KW-0677">Repeat</keyword>
<gene>
    <name evidence="1" type="primary">carB</name>
    <name type="ordered locus">R01576</name>
    <name type="ORF">SMc01215</name>
</gene>
<organism>
    <name type="scientific">Rhizobium meliloti (strain 1021)</name>
    <name type="common">Ensifer meliloti</name>
    <name type="synonym">Sinorhizobium meliloti</name>
    <dbReference type="NCBI Taxonomy" id="266834"/>
    <lineage>
        <taxon>Bacteria</taxon>
        <taxon>Pseudomonadati</taxon>
        <taxon>Pseudomonadota</taxon>
        <taxon>Alphaproteobacteria</taxon>
        <taxon>Hyphomicrobiales</taxon>
        <taxon>Rhizobiaceae</taxon>
        <taxon>Sinorhizobium/Ensifer group</taxon>
        <taxon>Sinorhizobium</taxon>
    </lineage>
</organism>
<sequence>MPKRQDIKSILIIGAGPIVIGQACEFDYSGTQACKALKEEGYRVILVNSNPATIMTDPGLADATYVEPITPEVVAKIIAKERPDALLPTMGGQTALNTALSLRRMGVLDRYNVEMIGAKPEAIDKAEDRALFREAMAHIGLETPKSRLANATDIKDHDRKSHEAERSALKAKLSGDELDKALDELENQWNLGEGDRKQRYVNHAMAIAAQALDDVGLPAIIRPSFTLGGTGGGIAYNRSEFFEIVGSGLDASPTTEVLIEESVLGWKEYEMEVVRDKADNCIIICSIENIDPMGVHTGDSITVAPALTLTDKEYQIMRNASIAVLREIGVETGGSNVQFAVNPENGRLVVIEMNPRVSRSSALASKATGFPIAKIAAKLAVGYTLDELENDITGGATPASFEPSIDYVVTKIPRFAFEKFPGAEPTLTTAMKSVGEVMAIGRTFAESLQKALRGLETGLTGLDEIEVPDFDDNGDGRNAIRAALGTPTPDRLRMVAQALRLGMSEAEVHEACKIDPWFIAQFKAIVDMEARIREHGLPADAENLRMLKAMGFSDARLATLTGKRPKEVAELRNALNVRPVYKRIDTCAAEFASPTAYMYSTYETPFVGAARSEAQVSDRKKVVILGGGPNRIGQGIEFDYCCCHAAFALKDAGYEAIMINCNPETVSTDYDTSDRLYFEPLTAEDVIEIMRAEQENGTLHGVIVQFGGQTPLKLAEALEKNGIPILGTAPDAIDLAEDRDRFQKLLMKLDLNQPNNGIAYSVEQARLVAGEIGFPLVVRPSYVLGGRAMQIIHSESMLQSYLLDTVPGLVPEDIKQRYPNDKTGQINTLLGKNPLLFDSYLTNAIEVDVDCLCDGKDVFVSGIMEHIEEAGIHSGDSACSLPVHSLGTDMVDELERQTGALARALNVGGLMNVQFAIKDGTIYVLEVNPRASRTVPFVAKTIGAPIAKIAARVMAGEMLDEAIAAYGKKPNPRNLKHIAVKEAVFPFARFPGVDTLLGPEMRSTGEVIGLDTDYALAFAKSQLGAGVDLPRDGTVFVSVRDEDKERVLPAIRILSDIGFKVMATGGTARFLGEQGIVATKINKVLEGRPHVEDAIRNRQVQLVINTTDGNKAISDSKSLRRATLMQKVPYYTTMAGAEAAALAIKALKAGNLEVRPLQSYFET</sequence>
<name>CARB_RHIME</name>